<reference key="1">
    <citation type="journal article" date="1995" name="Biochem. Biophys. Res. Commun.">
        <title>Homology cloning of GTP-cyclohydrolase I from various unrelated eukaryotes by reverse-transcription polymerase chain reaction using a general set of degenerate primers.</title>
        <authorList>
            <person name="Maier J."/>
            <person name="Witter K."/>
            <person name="Guetlich M."/>
            <person name="Ziegler I."/>
            <person name="Werner T."/>
            <person name="Ninnemann H."/>
        </authorList>
    </citation>
    <scope>NUCLEOTIDE SEQUENCE [MRNA]</scope>
    <source>
        <strain>Z / ATCC 12894</strain>
    </source>
</reference>
<name>GCH1_EUGGR</name>
<feature type="chain" id="PRO_0000119484" description="GTP cyclohydrolase 1">
    <location>
        <begin position="1" status="less than"/>
        <end position="80" status="greater than"/>
    </location>
</feature>
<feature type="binding site" evidence="1">
    <location>
        <position position="4"/>
    </location>
    <ligand>
        <name>Zn(2+)</name>
        <dbReference type="ChEBI" id="CHEBI:29105"/>
    </ligand>
</feature>
<feature type="binding site" evidence="1">
    <location>
        <position position="7"/>
    </location>
    <ligand>
        <name>Zn(2+)</name>
        <dbReference type="ChEBI" id="CHEBI:29105"/>
    </ligand>
</feature>
<feature type="binding site" evidence="1">
    <location>
        <position position="75"/>
    </location>
    <ligand>
        <name>Zn(2+)</name>
        <dbReference type="ChEBI" id="CHEBI:29105"/>
    </ligand>
</feature>
<feature type="non-terminal residue">
    <location>
        <position position="1"/>
    </location>
</feature>
<feature type="non-terminal residue">
    <location>
        <position position="80"/>
    </location>
</feature>
<organism>
    <name type="scientific">Euglena gracilis</name>
    <dbReference type="NCBI Taxonomy" id="3039"/>
    <lineage>
        <taxon>Eukaryota</taxon>
        <taxon>Discoba</taxon>
        <taxon>Euglenozoa</taxon>
        <taxon>Euglenida</taxon>
        <taxon>Spirocuta</taxon>
        <taxon>Euglenophyceae</taxon>
        <taxon>Euglenales</taxon>
        <taxon>Euglenaceae</taxon>
        <taxon>Euglena</taxon>
    </lineage>
</organism>
<sequence length="80" mass="9097">FSMCEHHMLPFWGKVHIAYIPKGKVLGLSKLARVAEMYARRLQVQERLTRQIASAIERSIQPLGVAVVVDCCHMCMVMRG</sequence>
<protein>
    <recommendedName>
        <fullName>GTP cyclohydrolase 1</fullName>
        <ecNumber>3.5.4.16</ecNumber>
    </recommendedName>
    <alternativeName>
        <fullName>GTP cyclohydrolase I</fullName>
        <shortName>GTP-CH-I</shortName>
    </alternativeName>
</protein>
<accession>P51597</accession>
<proteinExistence type="evidence at transcript level"/>
<evidence type="ECO:0000250" key="1"/>
<evidence type="ECO:0000305" key="2"/>
<dbReference type="EC" id="3.5.4.16"/>
<dbReference type="EMBL" id="Z49757">
    <property type="protein sequence ID" value="CAA89827.1"/>
    <property type="molecule type" value="mRNA"/>
</dbReference>
<dbReference type="PIR" id="S54909">
    <property type="entry name" value="S54909"/>
</dbReference>
<dbReference type="SMR" id="P51597"/>
<dbReference type="UniPathway" id="UPA00848">
    <property type="reaction ID" value="UER00151"/>
</dbReference>
<dbReference type="GO" id="GO:0005737">
    <property type="term" value="C:cytoplasm"/>
    <property type="evidence" value="ECO:0007669"/>
    <property type="project" value="TreeGrafter"/>
</dbReference>
<dbReference type="GO" id="GO:0005525">
    <property type="term" value="F:GTP binding"/>
    <property type="evidence" value="ECO:0007669"/>
    <property type="project" value="UniProtKB-KW"/>
</dbReference>
<dbReference type="GO" id="GO:0003934">
    <property type="term" value="F:GTP cyclohydrolase I activity"/>
    <property type="evidence" value="ECO:0007669"/>
    <property type="project" value="UniProtKB-EC"/>
</dbReference>
<dbReference type="GO" id="GO:0008270">
    <property type="term" value="F:zinc ion binding"/>
    <property type="evidence" value="ECO:0007669"/>
    <property type="project" value="TreeGrafter"/>
</dbReference>
<dbReference type="GO" id="GO:0006729">
    <property type="term" value="P:tetrahydrobiopterin biosynthetic process"/>
    <property type="evidence" value="ECO:0007669"/>
    <property type="project" value="UniProtKB-KW"/>
</dbReference>
<dbReference type="GO" id="GO:0046654">
    <property type="term" value="P:tetrahydrofolate biosynthetic process"/>
    <property type="evidence" value="ECO:0007669"/>
    <property type="project" value="InterPro"/>
</dbReference>
<dbReference type="FunFam" id="3.30.1130.10:FF:000001">
    <property type="entry name" value="GTP cyclohydrolase 1"/>
    <property type="match status" value="1"/>
</dbReference>
<dbReference type="Gene3D" id="3.30.1130.10">
    <property type="match status" value="1"/>
</dbReference>
<dbReference type="InterPro" id="IPR043133">
    <property type="entry name" value="GTP-CH-I_C/QueF"/>
</dbReference>
<dbReference type="InterPro" id="IPR001474">
    <property type="entry name" value="GTP_CycHdrlase_I"/>
</dbReference>
<dbReference type="InterPro" id="IPR018234">
    <property type="entry name" value="GTP_CycHdrlase_I_CS"/>
</dbReference>
<dbReference type="InterPro" id="IPR020602">
    <property type="entry name" value="GTP_CycHdrlase_I_dom"/>
</dbReference>
<dbReference type="PANTHER" id="PTHR11109:SF7">
    <property type="entry name" value="GTP CYCLOHYDROLASE 1"/>
    <property type="match status" value="1"/>
</dbReference>
<dbReference type="PANTHER" id="PTHR11109">
    <property type="entry name" value="GTP CYCLOHYDROLASE I"/>
    <property type="match status" value="1"/>
</dbReference>
<dbReference type="Pfam" id="PF01227">
    <property type="entry name" value="GTP_cyclohydroI"/>
    <property type="match status" value="1"/>
</dbReference>
<dbReference type="SUPFAM" id="SSF55620">
    <property type="entry name" value="Tetrahydrobiopterin biosynthesis enzymes-like"/>
    <property type="match status" value="1"/>
</dbReference>
<dbReference type="PROSITE" id="PS00860">
    <property type="entry name" value="GTP_CYCLOHYDROL_1_2"/>
    <property type="match status" value="1"/>
</dbReference>
<comment type="catalytic activity">
    <reaction>
        <text>GTP + H2O = 7,8-dihydroneopterin 3'-triphosphate + formate + H(+)</text>
        <dbReference type="Rhea" id="RHEA:17473"/>
        <dbReference type="ChEBI" id="CHEBI:15377"/>
        <dbReference type="ChEBI" id="CHEBI:15378"/>
        <dbReference type="ChEBI" id="CHEBI:15740"/>
        <dbReference type="ChEBI" id="CHEBI:37565"/>
        <dbReference type="ChEBI" id="CHEBI:58462"/>
        <dbReference type="EC" id="3.5.4.16"/>
    </reaction>
</comment>
<comment type="activity regulation">
    <text evidence="1">GTP shows a positive allosteric effect, and tetrahydrobiopterin inhibits the enzyme activity.</text>
</comment>
<comment type="pathway">
    <text>Cofactor biosynthesis; 7,8-dihydroneopterin triphosphate biosynthesis; 7,8-dihydroneopterin triphosphate from GTP: step 1/1.</text>
</comment>
<comment type="subunit">
    <text evidence="1">Toroid-shaped homodecamer, composed of two pentamers of five dimers.</text>
</comment>
<comment type="similarity">
    <text evidence="2">Belongs to the GTP cyclohydrolase I family.</text>
</comment>
<keyword id="KW-0021">Allosteric enzyme</keyword>
<keyword id="KW-0342">GTP-binding</keyword>
<keyword id="KW-0378">Hydrolase</keyword>
<keyword id="KW-0479">Metal-binding</keyword>
<keyword id="KW-0547">Nucleotide-binding</keyword>
<keyword id="KW-0783">Tetrahydrobiopterin biosynthesis</keyword>
<keyword id="KW-0862">Zinc</keyword>